<proteinExistence type="inferred from homology"/>
<keyword id="KW-0067">ATP-binding</keyword>
<keyword id="KW-0963">Cytoplasm</keyword>
<keyword id="KW-0418">Kinase</keyword>
<keyword id="KW-0460">Magnesium</keyword>
<keyword id="KW-0479">Metal-binding</keyword>
<keyword id="KW-0546">Nucleotide metabolism</keyword>
<keyword id="KW-0547">Nucleotide-binding</keyword>
<keyword id="KW-0597">Phosphoprotein</keyword>
<keyword id="KW-1185">Reference proteome</keyword>
<keyword id="KW-0808">Transferase</keyword>
<reference key="1">
    <citation type="journal article" date="2004" name="Science">
        <title>A predator unmasked: life cycle of Bdellovibrio bacteriovorus from a genomic perspective.</title>
        <authorList>
            <person name="Rendulic S."/>
            <person name="Jagtap P."/>
            <person name="Rosinus A."/>
            <person name="Eppinger M."/>
            <person name="Baar C."/>
            <person name="Lanz C."/>
            <person name="Keller H."/>
            <person name="Lambert C."/>
            <person name="Evans K.J."/>
            <person name="Goesmann A."/>
            <person name="Meyer F."/>
            <person name="Sockett R.E."/>
            <person name="Schuster S.C."/>
        </authorList>
    </citation>
    <scope>NUCLEOTIDE SEQUENCE [LARGE SCALE GENOMIC DNA]</scope>
    <source>
        <strain>ATCC 15356 / DSM 50701 / NCIMB 9529 / HD100</strain>
    </source>
</reference>
<organism>
    <name type="scientific">Bdellovibrio bacteriovorus (strain ATCC 15356 / DSM 50701 / NCIMB 9529 / HD100)</name>
    <dbReference type="NCBI Taxonomy" id="264462"/>
    <lineage>
        <taxon>Bacteria</taxon>
        <taxon>Pseudomonadati</taxon>
        <taxon>Bdellovibrionota</taxon>
        <taxon>Bdellovibrionia</taxon>
        <taxon>Bdellovibrionales</taxon>
        <taxon>Pseudobdellovibrionaceae</taxon>
        <taxon>Bdellovibrio</taxon>
    </lineage>
</organism>
<comment type="function">
    <text evidence="1">Major role in the synthesis of nucleoside triphosphates other than ATP. The ATP gamma phosphate is transferred to the NDP beta phosphate via a ping-pong mechanism, using a phosphorylated active-site intermediate.</text>
</comment>
<comment type="catalytic activity">
    <reaction evidence="1">
        <text>a 2'-deoxyribonucleoside 5'-diphosphate + ATP = a 2'-deoxyribonucleoside 5'-triphosphate + ADP</text>
        <dbReference type="Rhea" id="RHEA:44640"/>
        <dbReference type="ChEBI" id="CHEBI:30616"/>
        <dbReference type="ChEBI" id="CHEBI:61560"/>
        <dbReference type="ChEBI" id="CHEBI:73316"/>
        <dbReference type="ChEBI" id="CHEBI:456216"/>
        <dbReference type="EC" id="2.7.4.6"/>
    </reaction>
</comment>
<comment type="catalytic activity">
    <reaction evidence="1">
        <text>a ribonucleoside 5'-diphosphate + ATP = a ribonucleoside 5'-triphosphate + ADP</text>
        <dbReference type="Rhea" id="RHEA:18113"/>
        <dbReference type="ChEBI" id="CHEBI:30616"/>
        <dbReference type="ChEBI" id="CHEBI:57930"/>
        <dbReference type="ChEBI" id="CHEBI:61557"/>
        <dbReference type="ChEBI" id="CHEBI:456216"/>
        <dbReference type="EC" id="2.7.4.6"/>
    </reaction>
</comment>
<comment type="cofactor">
    <cofactor evidence="1">
        <name>Mg(2+)</name>
        <dbReference type="ChEBI" id="CHEBI:18420"/>
    </cofactor>
</comment>
<comment type="subunit">
    <text evidence="1">Homotetramer.</text>
</comment>
<comment type="subcellular location">
    <subcellularLocation>
        <location evidence="1">Cytoplasm</location>
    </subcellularLocation>
</comment>
<comment type="similarity">
    <text evidence="1">Belongs to the NDK family.</text>
</comment>
<name>NDK_BDEBA</name>
<gene>
    <name evidence="1" type="primary">ndk</name>
    <name type="ordered locus">Bd3827</name>
</gene>
<evidence type="ECO:0000255" key="1">
    <source>
        <dbReference type="HAMAP-Rule" id="MF_00451"/>
    </source>
</evidence>
<dbReference type="EC" id="2.7.4.6" evidence="1"/>
<dbReference type="EMBL" id="BX842656">
    <property type="protein sequence ID" value="CAE81185.1"/>
    <property type="molecule type" value="Genomic_DNA"/>
</dbReference>
<dbReference type="RefSeq" id="WP_011166128.1">
    <property type="nucleotide sequence ID" value="NC_005363.1"/>
</dbReference>
<dbReference type="SMR" id="Q6MGU4"/>
<dbReference type="STRING" id="264462.Bd3827"/>
<dbReference type="GeneID" id="93014597"/>
<dbReference type="KEGG" id="bba:Bd3827"/>
<dbReference type="eggNOG" id="COG0105">
    <property type="taxonomic scope" value="Bacteria"/>
</dbReference>
<dbReference type="HOGENOM" id="CLU_060216_8_1_7"/>
<dbReference type="Proteomes" id="UP000008080">
    <property type="component" value="Chromosome"/>
</dbReference>
<dbReference type="GO" id="GO:0005737">
    <property type="term" value="C:cytoplasm"/>
    <property type="evidence" value="ECO:0007669"/>
    <property type="project" value="UniProtKB-SubCell"/>
</dbReference>
<dbReference type="GO" id="GO:0005524">
    <property type="term" value="F:ATP binding"/>
    <property type="evidence" value="ECO:0007669"/>
    <property type="project" value="UniProtKB-UniRule"/>
</dbReference>
<dbReference type="GO" id="GO:0046872">
    <property type="term" value="F:metal ion binding"/>
    <property type="evidence" value="ECO:0007669"/>
    <property type="project" value="UniProtKB-KW"/>
</dbReference>
<dbReference type="GO" id="GO:0004550">
    <property type="term" value="F:nucleoside diphosphate kinase activity"/>
    <property type="evidence" value="ECO:0007669"/>
    <property type="project" value="UniProtKB-UniRule"/>
</dbReference>
<dbReference type="GO" id="GO:0006241">
    <property type="term" value="P:CTP biosynthetic process"/>
    <property type="evidence" value="ECO:0007669"/>
    <property type="project" value="UniProtKB-UniRule"/>
</dbReference>
<dbReference type="GO" id="GO:0006183">
    <property type="term" value="P:GTP biosynthetic process"/>
    <property type="evidence" value="ECO:0007669"/>
    <property type="project" value="UniProtKB-UniRule"/>
</dbReference>
<dbReference type="GO" id="GO:0006228">
    <property type="term" value="P:UTP biosynthetic process"/>
    <property type="evidence" value="ECO:0007669"/>
    <property type="project" value="UniProtKB-UniRule"/>
</dbReference>
<dbReference type="CDD" id="cd04413">
    <property type="entry name" value="NDPk_I"/>
    <property type="match status" value="1"/>
</dbReference>
<dbReference type="FunFam" id="3.30.70.141:FF:000003">
    <property type="entry name" value="Nucleoside diphosphate kinase"/>
    <property type="match status" value="1"/>
</dbReference>
<dbReference type="Gene3D" id="3.30.70.141">
    <property type="entry name" value="Nucleoside diphosphate kinase-like domain"/>
    <property type="match status" value="1"/>
</dbReference>
<dbReference type="HAMAP" id="MF_00451">
    <property type="entry name" value="NDP_kinase"/>
    <property type="match status" value="1"/>
</dbReference>
<dbReference type="InterPro" id="IPR034907">
    <property type="entry name" value="NDK-like_dom"/>
</dbReference>
<dbReference type="InterPro" id="IPR036850">
    <property type="entry name" value="NDK-like_dom_sf"/>
</dbReference>
<dbReference type="InterPro" id="IPR001564">
    <property type="entry name" value="Nucleoside_diP_kinase"/>
</dbReference>
<dbReference type="InterPro" id="IPR023005">
    <property type="entry name" value="Nucleoside_diP_kinase_AS"/>
</dbReference>
<dbReference type="NCBIfam" id="NF001908">
    <property type="entry name" value="PRK00668.1"/>
    <property type="match status" value="1"/>
</dbReference>
<dbReference type="PANTHER" id="PTHR46161">
    <property type="entry name" value="NUCLEOSIDE DIPHOSPHATE KINASE"/>
    <property type="match status" value="1"/>
</dbReference>
<dbReference type="PANTHER" id="PTHR46161:SF3">
    <property type="entry name" value="NUCLEOSIDE DIPHOSPHATE KINASE DDB_G0292928-RELATED"/>
    <property type="match status" value="1"/>
</dbReference>
<dbReference type="Pfam" id="PF00334">
    <property type="entry name" value="NDK"/>
    <property type="match status" value="1"/>
</dbReference>
<dbReference type="PRINTS" id="PR01243">
    <property type="entry name" value="NUCDPKINASE"/>
</dbReference>
<dbReference type="SMART" id="SM00562">
    <property type="entry name" value="NDK"/>
    <property type="match status" value="1"/>
</dbReference>
<dbReference type="SUPFAM" id="SSF54919">
    <property type="entry name" value="Nucleoside diphosphate kinase, NDK"/>
    <property type="match status" value="1"/>
</dbReference>
<dbReference type="PROSITE" id="PS00469">
    <property type="entry name" value="NDPK"/>
    <property type="match status" value="1"/>
</dbReference>
<dbReference type="PROSITE" id="PS51374">
    <property type="entry name" value="NDPK_LIKE"/>
    <property type="match status" value="1"/>
</dbReference>
<accession>Q6MGU4</accession>
<sequence length="141" mass="15223">MSIEQTFSIIKPNAMKKNAIGDIVSMFEANGLKIAAAKITVLTTAKAEEFYAEHKARPFFGELVSFMTSGPVMLMCLQGEGAVLKNREIMGATDPKKANPGTVRAKFGDNVGENAVHGSDSPESAARELALFFEKHEICNV</sequence>
<protein>
    <recommendedName>
        <fullName evidence="1">Nucleoside diphosphate kinase</fullName>
        <shortName evidence="1">NDK</shortName>
        <shortName evidence="1">NDP kinase</shortName>
        <ecNumber evidence="1">2.7.4.6</ecNumber>
    </recommendedName>
    <alternativeName>
        <fullName evidence="1">Nucleoside-2-P kinase</fullName>
    </alternativeName>
</protein>
<feature type="chain" id="PRO_0000136949" description="Nucleoside diphosphate kinase">
    <location>
        <begin position="1"/>
        <end position="141"/>
    </location>
</feature>
<feature type="active site" description="Pros-phosphohistidine intermediate" evidence="1">
    <location>
        <position position="117"/>
    </location>
</feature>
<feature type="binding site" evidence="1">
    <location>
        <position position="11"/>
    </location>
    <ligand>
        <name>ATP</name>
        <dbReference type="ChEBI" id="CHEBI:30616"/>
    </ligand>
</feature>
<feature type="binding site" evidence="1">
    <location>
        <position position="59"/>
    </location>
    <ligand>
        <name>ATP</name>
        <dbReference type="ChEBI" id="CHEBI:30616"/>
    </ligand>
</feature>
<feature type="binding site" evidence="1">
    <location>
        <position position="87"/>
    </location>
    <ligand>
        <name>ATP</name>
        <dbReference type="ChEBI" id="CHEBI:30616"/>
    </ligand>
</feature>
<feature type="binding site" evidence="1">
    <location>
        <position position="93"/>
    </location>
    <ligand>
        <name>ATP</name>
        <dbReference type="ChEBI" id="CHEBI:30616"/>
    </ligand>
</feature>
<feature type="binding site" evidence="1">
    <location>
        <position position="104"/>
    </location>
    <ligand>
        <name>ATP</name>
        <dbReference type="ChEBI" id="CHEBI:30616"/>
    </ligand>
</feature>
<feature type="binding site" evidence="1">
    <location>
        <position position="114"/>
    </location>
    <ligand>
        <name>ATP</name>
        <dbReference type="ChEBI" id="CHEBI:30616"/>
    </ligand>
</feature>